<keyword id="KW-0030">Aminoacyl-tRNA synthetase</keyword>
<keyword id="KW-0067">ATP-binding</keyword>
<keyword id="KW-0436">Ligase</keyword>
<keyword id="KW-0496">Mitochondrion</keyword>
<keyword id="KW-0547">Nucleotide-binding</keyword>
<keyword id="KW-0648">Protein biosynthesis</keyword>
<keyword id="KW-1185">Reference proteome</keyword>
<keyword id="KW-0809">Transit peptide</keyword>
<organism>
    <name type="scientific">Dictyostelium discoideum</name>
    <name type="common">Social amoeba</name>
    <dbReference type="NCBI Taxonomy" id="44689"/>
    <lineage>
        <taxon>Eukaryota</taxon>
        <taxon>Amoebozoa</taxon>
        <taxon>Evosea</taxon>
        <taxon>Eumycetozoa</taxon>
        <taxon>Dictyostelia</taxon>
        <taxon>Dictyosteliales</taxon>
        <taxon>Dictyosteliaceae</taxon>
        <taxon>Dictyostelium</taxon>
    </lineage>
</organism>
<feature type="transit peptide" description="Mitochondrion" evidence="1">
    <location>
        <begin position="1"/>
        <end status="unknown"/>
    </location>
</feature>
<feature type="chain" id="PRO_0000341689" description="Probable histidine--tRNA ligase, mitochondrial">
    <location>
        <begin status="unknown"/>
        <end position="501"/>
    </location>
</feature>
<feature type="region of interest" description="Disordered" evidence="2">
    <location>
        <begin position="32"/>
        <end position="54"/>
    </location>
</feature>
<feature type="compositionally biased region" description="Low complexity" evidence="2">
    <location>
        <begin position="33"/>
        <end position="54"/>
    </location>
</feature>
<comment type="catalytic activity">
    <reaction>
        <text>tRNA(His) + L-histidine + ATP = L-histidyl-tRNA(His) + AMP + diphosphate + H(+)</text>
        <dbReference type="Rhea" id="RHEA:17313"/>
        <dbReference type="Rhea" id="RHEA-COMP:9665"/>
        <dbReference type="Rhea" id="RHEA-COMP:9689"/>
        <dbReference type="ChEBI" id="CHEBI:15378"/>
        <dbReference type="ChEBI" id="CHEBI:30616"/>
        <dbReference type="ChEBI" id="CHEBI:33019"/>
        <dbReference type="ChEBI" id="CHEBI:57595"/>
        <dbReference type="ChEBI" id="CHEBI:78442"/>
        <dbReference type="ChEBI" id="CHEBI:78527"/>
        <dbReference type="ChEBI" id="CHEBI:456215"/>
        <dbReference type="EC" id="6.1.1.21"/>
    </reaction>
</comment>
<comment type="subcellular location">
    <subcellularLocation>
        <location evidence="3">Mitochondrion matrix</location>
    </subcellularLocation>
</comment>
<comment type="similarity">
    <text evidence="3">Belongs to the class-II aminoacyl-tRNA synthetase family.</text>
</comment>
<dbReference type="EC" id="6.1.1.21"/>
<dbReference type="EMBL" id="AAFI02000005">
    <property type="protein sequence ID" value="EAL72261.1"/>
    <property type="molecule type" value="Genomic_DNA"/>
</dbReference>
<dbReference type="RefSeq" id="XP_646319.1">
    <property type="nucleotide sequence ID" value="XM_641227.1"/>
</dbReference>
<dbReference type="SMR" id="Q55D12"/>
<dbReference type="FunCoup" id="Q55D12">
    <property type="interactions" value="44"/>
</dbReference>
<dbReference type="STRING" id="44689.Q55D12"/>
<dbReference type="PaxDb" id="44689-DDB0231331"/>
<dbReference type="EnsemblProtists" id="EAL72261">
    <property type="protein sequence ID" value="EAL72261"/>
    <property type="gene ID" value="DDB_G0269822"/>
</dbReference>
<dbReference type="GeneID" id="8617274"/>
<dbReference type="KEGG" id="ddi:DDB_G0269822"/>
<dbReference type="dictyBase" id="DDB_G0269822">
    <property type="gene designation" value="mhisS"/>
</dbReference>
<dbReference type="VEuPathDB" id="AmoebaDB:DDB_G0269822"/>
<dbReference type="eggNOG" id="KOG1936">
    <property type="taxonomic scope" value="Eukaryota"/>
</dbReference>
<dbReference type="HOGENOM" id="CLU_025113_1_0_1"/>
<dbReference type="InParanoid" id="Q55D12"/>
<dbReference type="OMA" id="DSQQHRA"/>
<dbReference type="PhylomeDB" id="Q55D12"/>
<dbReference type="PRO" id="PR:Q55D12"/>
<dbReference type="Proteomes" id="UP000002195">
    <property type="component" value="Chromosome 1"/>
</dbReference>
<dbReference type="GO" id="GO:0005759">
    <property type="term" value="C:mitochondrial matrix"/>
    <property type="evidence" value="ECO:0007669"/>
    <property type="project" value="UniProtKB-SubCell"/>
</dbReference>
<dbReference type="GO" id="GO:0005524">
    <property type="term" value="F:ATP binding"/>
    <property type="evidence" value="ECO:0007669"/>
    <property type="project" value="UniProtKB-KW"/>
</dbReference>
<dbReference type="GO" id="GO:0004821">
    <property type="term" value="F:histidine-tRNA ligase activity"/>
    <property type="evidence" value="ECO:0000250"/>
    <property type="project" value="dictyBase"/>
</dbReference>
<dbReference type="GO" id="GO:0006427">
    <property type="term" value="P:histidyl-tRNA aminoacylation"/>
    <property type="evidence" value="ECO:0000250"/>
    <property type="project" value="dictyBase"/>
</dbReference>
<dbReference type="CDD" id="cd00773">
    <property type="entry name" value="HisRS-like_core"/>
    <property type="match status" value="1"/>
</dbReference>
<dbReference type="FunFam" id="3.30.930.10:FF:000121">
    <property type="entry name" value="Histidine--tRNA ligase"/>
    <property type="match status" value="1"/>
</dbReference>
<dbReference type="FunFam" id="3.40.50.800:FF:000065">
    <property type="entry name" value="Histidine--tRNA ligase protein"/>
    <property type="match status" value="1"/>
</dbReference>
<dbReference type="Gene3D" id="3.40.50.800">
    <property type="entry name" value="Anticodon-binding domain"/>
    <property type="match status" value="1"/>
</dbReference>
<dbReference type="Gene3D" id="3.30.930.10">
    <property type="entry name" value="Bira Bifunctional Protein, Domain 2"/>
    <property type="match status" value="1"/>
</dbReference>
<dbReference type="HAMAP" id="MF_00127">
    <property type="entry name" value="His_tRNA_synth"/>
    <property type="match status" value="1"/>
</dbReference>
<dbReference type="InterPro" id="IPR006195">
    <property type="entry name" value="aa-tRNA-synth_II"/>
</dbReference>
<dbReference type="InterPro" id="IPR045864">
    <property type="entry name" value="aa-tRNA-synth_II/BPL/LPL"/>
</dbReference>
<dbReference type="InterPro" id="IPR004154">
    <property type="entry name" value="Anticodon-bd"/>
</dbReference>
<dbReference type="InterPro" id="IPR036621">
    <property type="entry name" value="Anticodon-bd_dom_sf"/>
</dbReference>
<dbReference type="InterPro" id="IPR015807">
    <property type="entry name" value="His-tRNA-ligase"/>
</dbReference>
<dbReference type="InterPro" id="IPR041715">
    <property type="entry name" value="HisRS-like_core"/>
</dbReference>
<dbReference type="InterPro" id="IPR004516">
    <property type="entry name" value="HisRS/HisZ"/>
</dbReference>
<dbReference type="NCBIfam" id="TIGR00442">
    <property type="entry name" value="hisS"/>
    <property type="match status" value="1"/>
</dbReference>
<dbReference type="PANTHER" id="PTHR43707:SF1">
    <property type="entry name" value="HISTIDINE--TRNA LIGASE, MITOCHONDRIAL-RELATED"/>
    <property type="match status" value="1"/>
</dbReference>
<dbReference type="PANTHER" id="PTHR43707">
    <property type="entry name" value="HISTIDYL-TRNA SYNTHETASE"/>
    <property type="match status" value="1"/>
</dbReference>
<dbReference type="Pfam" id="PF03129">
    <property type="entry name" value="HGTP_anticodon"/>
    <property type="match status" value="1"/>
</dbReference>
<dbReference type="Pfam" id="PF13393">
    <property type="entry name" value="tRNA-synt_His"/>
    <property type="match status" value="1"/>
</dbReference>
<dbReference type="PIRSF" id="PIRSF001549">
    <property type="entry name" value="His-tRNA_synth"/>
    <property type="match status" value="1"/>
</dbReference>
<dbReference type="SUPFAM" id="SSF52954">
    <property type="entry name" value="Class II aaRS ABD-related"/>
    <property type="match status" value="1"/>
</dbReference>
<dbReference type="SUPFAM" id="SSF55681">
    <property type="entry name" value="Class II aaRS and biotin synthetases"/>
    <property type="match status" value="1"/>
</dbReference>
<dbReference type="PROSITE" id="PS50862">
    <property type="entry name" value="AA_TRNA_LIGASE_II"/>
    <property type="match status" value="1"/>
</dbReference>
<protein>
    <recommendedName>
        <fullName>Probable histidine--tRNA ligase, mitochondrial</fullName>
        <ecNumber>6.1.1.21</ecNumber>
    </recommendedName>
    <alternativeName>
        <fullName>Histidyl-tRNA synthetase</fullName>
        <shortName>HisRS</shortName>
    </alternativeName>
</protein>
<gene>
    <name type="primary">mhisS</name>
    <name type="ORF">DDB_G0269822</name>
</gene>
<reference key="1">
    <citation type="journal article" date="2005" name="Nature">
        <title>The genome of the social amoeba Dictyostelium discoideum.</title>
        <authorList>
            <person name="Eichinger L."/>
            <person name="Pachebat J.A."/>
            <person name="Gloeckner G."/>
            <person name="Rajandream M.A."/>
            <person name="Sucgang R."/>
            <person name="Berriman M."/>
            <person name="Song J."/>
            <person name="Olsen R."/>
            <person name="Szafranski K."/>
            <person name="Xu Q."/>
            <person name="Tunggal B."/>
            <person name="Kummerfeld S."/>
            <person name="Madera M."/>
            <person name="Konfortov B.A."/>
            <person name="Rivero F."/>
            <person name="Bankier A.T."/>
            <person name="Lehmann R."/>
            <person name="Hamlin N."/>
            <person name="Davies R."/>
            <person name="Gaudet P."/>
            <person name="Fey P."/>
            <person name="Pilcher K."/>
            <person name="Chen G."/>
            <person name="Saunders D."/>
            <person name="Sodergren E.J."/>
            <person name="Davis P."/>
            <person name="Kerhornou A."/>
            <person name="Nie X."/>
            <person name="Hall N."/>
            <person name="Anjard C."/>
            <person name="Hemphill L."/>
            <person name="Bason N."/>
            <person name="Farbrother P."/>
            <person name="Desany B."/>
            <person name="Just E."/>
            <person name="Morio T."/>
            <person name="Rost R."/>
            <person name="Churcher C.M."/>
            <person name="Cooper J."/>
            <person name="Haydock S."/>
            <person name="van Driessche N."/>
            <person name="Cronin A."/>
            <person name="Goodhead I."/>
            <person name="Muzny D.M."/>
            <person name="Mourier T."/>
            <person name="Pain A."/>
            <person name="Lu M."/>
            <person name="Harper D."/>
            <person name="Lindsay R."/>
            <person name="Hauser H."/>
            <person name="James K.D."/>
            <person name="Quiles M."/>
            <person name="Madan Babu M."/>
            <person name="Saito T."/>
            <person name="Buchrieser C."/>
            <person name="Wardroper A."/>
            <person name="Felder M."/>
            <person name="Thangavelu M."/>
            <person name="Johnson D."/>
            <person name="Knights A."/>
            <person name="Loulseged H."/>
            <person name="Mungall K.L."/>
            <person name="Oliver K."/>
            <person name="Price C."/>
            <person name="Quail M.A."/>
            <person name="Urushihara H."/>
            <person name="Hernandez J."/>
            <person name="Rabbinowitsch E."/>
            <person name="Steffen D."/>
            <person name="Sanders M."/>
            <person name="Ma J."/>
            <person name="Kohara Y."/>
            <person name="Sharp S."/>
            <person name="Simmonds M.N."/>
            <person name="Spiegler S."/>
            <person name="Tivey A."/>
            <person name="Sugano S."/>
            <person name="White B."/>
            <person name="Walker D."/>
            <person name="Woodward J.R."/>
            <person name="Winckler T."/>
            <person name="Tanaka Y."/>
            <person name="Shaulsky G."/>
            <person name="Schleicher M."/>
            <person name="Weinstock G.M."/>
            <person name="Rosenthal A."/>
            <person name="Cox E.C."/>
            <person name="Chisholm R.L."/>
            <person name="Gibbs R.A."/>
            <person name="Loomis W.F."/>
            <person name="Platzer M."/>
            <person name="Kay R.R."/>
            <person name="Williams J.G."/>
            <person name="Dear P.H."/>
            <person name="Noegel A.A."/>
            <person name="Barrell B.G."/>
            <person name="Kuspa A."/>
        </authorList>
    </citation>
    <scope>NUCLEOTIDE SEQUENCE [LARGE SCALE GENOMIC DNA]</scope>
    <source>
        <strain>AX4</strain>
    </source>
</reference>
<sequence>MLKTSNLISSLLHNNLKNTSILRNKSIFYYSTNSNNNNNNNNNNNNNNNNNKNINLQNIKGTYDLFPNEQRIHKFIFDVGRGVAERYGFKEISTPIIEPFELFNRSVGESSDIVMKEMFKFKDYSNESSSPPSMICLRPEGTAGVIRAIINQSSTNHLTPAQRYYYQGPMFRYERPQRGRQRQFHQLGVELIGDQHPRSDVEIIDMAMNFIERLGINKSDTLLKINSLGDTDSIKVYNETLKRFYNDNVNKLSPISIKRLERGNSLRILDSKERQDIELNKLAPSIQDSLSIQCKDRFNNVLKGLDCLGISYEIDKSLVRGLDYYRHTIFEIQIIDNNQNNKGQRQQQQQQQGLAILGGGRYDGLANQLGYKYKEILPSIGWASGIERMVLFLDQSKIPNSIRPIGIAITDSSLSENAFKLCSNLRRNGWSSTLSTFNLEDENLSKQLKKFKNNPSFVIILAPSEYSNNTVIIKNMDDTTQSIIPLNEIDNFLENNKVLKN</sequence>
<name>SYHM_DICDI</name>
<accession>Q55D12</accession>
<evidence type="ECO:0000255" key="1"/>
<evidence type="ECO:0000256" key="2">
    <source>
        <dbReference type="SAM" id="MobiDB-lite"/>
    </source>
</evidence>
<evidence type="ECO:0000305" key="3"/>
<proteinExistence type="inferred from homology"/>